<feature type="chain" id="PRO_1000085005" description="Acetyl-coenzyme A synthetase">
    <location>
        <begin position="1"/>
        <end position="650"/>
    </location>
</feature>
<feature type="binding site" evidence="1">
    <location>
        <begin position="191"/>
        <end position="194"/>
    </location>
    <ligand>
        <name>CoA</name>
        <dbReference type="ChEBI" id="CHEBI:57287"/>
    </ligand>
</feature>
<feature type="binding site" evidence="1">
    <location>
        <position position="311"/>
    </location>
    <ligand>
        <name>CoA</name>
        <dbReference type="ChEBI" id="CHEBI:57287"/>
    </ligand>
</feature>
<feature type="binding site" evidence="1">
    <location>
        <position position="335"/>
    </location>
    <ligand>
        <name>CoA</name>
        <dbReference type="ChEBI" id="CHEBI:57287"/>
    </ligand>
</feature>
<feature type="binding site" evidence="1">
    <location>
        <begin position="387"/>
        <end position="389"/>
    </location>
    <ligand>
        <name>ATP</name>
        <dbReference type="ChEBI" id="CHEBI:30616"/>
    </ligand>
</feature>
<feature type="binding site" evidence="1">
    <location>
        <begin position="411"/>
        <end position="416"/>
    </location>
    <ligand>
        <name>ATP</name>
        <dbReference type="ChEBI" id="CHEBI:30616"/>
    </ligand>
</feature>
<feature type="binding site" evidence="1">
    <location>
        <position position="500"/>
    </location>
    <ligand>
        <name>ATP</name>
        <dbReference type="ChEBI" id="CHEBI:30616"/>
    </ligand>
</feature>
<feature type="binding site" evidence="1">
    <location>
        <position position="515"/>
    </location>
    <ligand>
        <name>ATP</name>
        <dbReference type="ChEBI" id="CHEBI:30616"/>
    </ligand>
</feature>
<feature type="binding site" evidence="1">
    <location>
        <position position="523"/>
    </location>
    <ligand>
        <name>CoA</name>
        <dbReference type="ChEBI" id="CHEBI:57287"/>
    </ligand>
</feature>
<feature type="binding site" evidence="1">
    <location>
        <position position="526"/>
    </location>
    <ligand>
        <name>ATP</name>
        <dbReference type="ChEBI" id="CHEBI:30616"/>
    </ligand>
</feature>
<feature type="binding site" evidence="1">
    <location>
        <position position="537"/>
    </location>
    <ligand>
        <name>Mg(2+)</name>
        <dbReference type="ChEBI" id="CHEBI:18420"/>
    </ligand>
</feature>
<feature type="binding site" evidence="1">
    <location>
        <position position="539"/>
    </location>
    <ligand>
        <name>Mg(2+)</name>
        <dbReference type="ChEBI" id="CHEBI:18420"/>
    </ligand>
</feature>
<feature type="binding site" evidence="1">
    <location>
        <position position="542"/>
    </location>
    <ligand>
        <name>Mg(2+)</name>
        <dbReference type="ChEBI" id="CHEBI:18420"/>
    </ligand>
</feature>
<feature type="binding site" evidence="1">
    <location>
        <position position="584"/>
    </location>
    <ligand>
        <name>CoA</name>
        <dbReference type="ChEBI" id="CHEBI:57287"/>
    </ligand>
</feature>
<feature type="modified residue" description="N6-acetyllysine" evidence="1">
    <location>
        <position position="609"/>
    </location>
</feature>
<dbReference type="EC" id="6.2.1.1" evidence="1"/>
<dbReference type="EMBL" id="CP000851">
    <property type="protein sequence ID" value="ABV87878.1"/>
    <property type="molecule type" value="Genomic_DNA"/>
</dbReference>
<dbReference type="RefSeq" id="WP_012155785.1">
    <property type="nucleotide sequence ID" value="NC_009901.1"/>
</dbReference>
<dbReference type="SMR" id="A8H5P1"/>
<dbReference type="STRING" id="398579.Spea_2558"/>
<dbReference type="KEGG" id="spl:Spea_2558"/>
<dbReference type="eggNOG" id="COG0365">
    <property type="taxonomic scope" value="Bacteria"/>
</dbReference>
<dbReference type="HOGENOM" id="CLU_000022_3_6_6"/>
<dbReference type="OrthoDB" id="9803968at2"/>
<dbReference type="Proteomes" id="UP000002608">
    <property type="component" value="Chromosome"/>
</dbReference>
<dbReference type="GO" id="GO:0005829">
    <property type="term" value="C:cytosol"/>
    <property type="evidence" value="ECO:0007669"/>
    <property type="project" value="TreeGrafter"/>
</dbReference>
<dbReference type="GO" id="GO:0003987">
    <property type="term" value="F:acetate-CoA ligase activity"/>
    <property type="evidence" value="ECO:0007669"/>
    <property type="project" value="UniProtKB-UniRule"/>
</dbReference>
<dbReference type="GO" id="GO:0016208">
    <property type="term" value="F:AMP binding"/>
    <property type="evidence" value="ECO:0007669"/>
    <property type="project" value="InterPro"/>
</dbReference>
<dbReference type="GO" id="GO:0005524">
    <property type="term" value="F:ATP binding"/>
    <property type="evidence" value="ECO:0007669"/>
    <property type="project" value="UniProtKB-KW"/>
</dbReference>
<dbReference type="GO" id="GO:0046872">
    <property type="term" value="F:metal ion binding"/>
    <property type="evidence" value="ECO:0007669"/>
    <property type="project" value="UniProtKB-KW"/>
</dbReference>
<dbReference type="GO" id="GO:0019427">
    <property type="term" value="P:acetyl-CoA biosynthetic process from acetate"/>
    <property type="evidence" value="ECO:0007669"/>
    <property type="project" value="InterPro"/>
</dbReference>
<dbReference type="CDD" id="cd05966">
    <property type="entry name" value="ACS"/>
    <property type="match status" value="1"/>
</dbReference>
<dbReference type="FunFam" id="3.30.300.30:FF:000004">
    <property type="entry name" value="Acetyl-coenzyme A synthetase"/>
    <property type="match status" value="1"/>
</dbReference>
<dbReference type="FunFam" id="3.40.50.12780:FF:000001">
    <property type="entry name" value="Acetyl-coenzyme A synthetase"/>
    <property type="match status" value="1"/>
</dbReference>
<dbReference type="Gene3D" id="3.30.300.30">
    <property type="match status" value="1"/>
</dbReference>
<dbReference type="Gene3D" id="3.40.50.12780">
    <property type="entry name" value="N-terminal domain of ligase-like"/>
    <property type="match status" value="1"/>
</dbReference>
<dbReference type="HAMAP" id="MF_01123">
    <property type="entry name" value="Ac_CoA_synth"/>
    <property type="match status" value="1"/>
</dbReference>
<dbReference type="InterPro" id="IPR011904">
    <property type="entry name" value="Ac_CoA_lig"/>
</dbReference>
<dbReference type="InterPro" id="IPR032387">
    <property type="entry name" value="ACAS_N"/>
</dbReference>
<dbReference type="InterPro" id="IPR025110">
    <property type="entry name" value="AMP-bd_C"/>
</dbReference>
<dbReference type="InterPro" id="IPR045851">
    <property type="entry name" value="AMP-bd_C_sf"/>
</dbReference>
<dbReference type="InterPro" id="IPR020845">
    <property type="entry name" value="AMP-binding_CS"/>
</dbReference>
<dbReference type="InterPro" id="IPR000873">
    <property type="entry name" value="AMP-dep_synth/lig_dom"/>
</dbReference>
<dbReference type="InterPro" id="IPR042099">
    <property type="entry name" value="ANL_N_sf"/>
</dbReference>
<dbReference type="NCBIfam" id="TIGR02188">
    <property type="entry name" value="Ac_CoA_lig_AcsA"/>
    <property type="match status" value="1"/>
</dbReference>
<dbReference type="NCBIfam" id="NF001208">
    <property type="entry name" value="PRK00174.1"/>
    <property type="match status" value="1"/>
</dbReference>
<dbReference type="PANTHER" id="PTHR24095">
    <property type="entry name" value="ACETYL-COENZYME A SYNTHETASE"/>
    <property type="match status" value="1"/>
</dbReference>
<dbReference type="PANTHER" id="PTHR24095:SF243">
    <property type="entry name" value="ACETYL-COENZYME A SYNTHETASE"/>
    <property type="match status" value="1"/>
</dbReference>
<dbReference type="Pfam" id="PF16177">
    <property type="entry name" value="ACAS_N"/>
    <property type="match status" value="1"/>
</dbReference>
<dbReference type="Pfam" id="PF00501">
    <property type="entry name" value="AMP-binding"/>
    <property type="match status" value="1"/>
</dbReference>
<dbReference type="Pfam" id="PF13193">
    <property type="entry name" value="AMP-binding_C"/>
    <property type="match status" value="1"/>
</dbReference>
<dbReference type="SUPFAM" id="SSF56801">
    <property type="entry name" value="Acetyl-CoA synthetase-like"/>
    <property type="match status" value="1"/>
</dbReference>
<dbReference type="PROSITE" id="PS00455">
    <property type="entry name" value="AMP_BINDING"/>
    <property type="match status" value="1"/>
</dbReference>
<evidence type="ECO:0000255" key="1">
    <source>
        <dbReference type="HAMAP-Rule" id="MF_01123"/>
    </source>
</evidence>
<comment type="function">
    <text evidence="1">Catalyzes the conversion of acetate into acetyl-CoA (AcCoA), an essential intermediate at the junction of anabolic and catabolic pathways. AcsA undergoes a two-step reaction. In the first half reaction, AcsA combines acetate with ATP to form acetyl-adenylate (AcAMP) intermediate. In the second half reaction, it can then transfer the acetyl group from AcAMP to the sulfhydryl group of CoA, forming the product AcCoA.</text>
</comment>
<comment type="catalytic activity">
    <reaction evidence="1">
        <text>acetate + ATP + CoA = acetyl-CoA + AMP + diphosphate</text>
        <dbReference type="Rhea" id="RHEA:23176"/>
        <dbReference type="ChEBI" id="CHEBI:30089"/>
        <dbReference type="ChEBI" id="CHEBI:30616"/>
        <dbReference type="ChEBI" id="CHEBI:33019"/>
        <dbReference type="ChEBI" id="CHEBI:57287"/>
        <dbReference type="ChEBI" id="CHEBI:57288"/>
        <dbReference type="ChEBI" id="CHEBI:456215"/>
        <dbReference type="EC" id="6.2.1.1"/>
    </reaction>
</comment>
<comment type="cofactor">
    <cofactor evidence="1">
        <name>Mg(2+)</name>
        <dbReference type="ChEBI" id="CHEBI:18420"/>
    </cofactor>
</comment>
<comment type="PTM">
    <text evidence="1">Acetylated. Deacetylation by the SIR2-homolog deacetylase activates the enzyme.</text>
</comment>
<comment type="similarity">
    <text evidence="1">Belongs to the ATP-dependent AMP-binding enzyme family.</text>
</comment>
<gene>
    <name evidence="1" type="primary">acsA</name>
    <name type="ordered locus">Spea_2558</name>
</gene>
<organism>
    <name type="scientific">Shewanella pealeana (strain ATCC 700345 / ANG-SQ1)</name>
    <dbReference type="NCBI Taxonomy" id="398579"/>
    <lineage>
        <taxon>Bacteria</taxon>
        <taxon>Pseudomonadati</taxon>
        <taxon>Pseudomonadota</taxon>
        <taxon>Gammaproteobacteria</taxon>
        <taxon>Alteromonadales</taxon>
        <taxon>Shewanellaceae</taxon>
        <taxon>Shewanella</taxon>
    </lineage>
</organism>
<proteinExistence type="inferred from homology"/>
<keyword id="KW-0007">Acetylation</keyword>
<keyword id="KW-0067">ATP-binding</keyword>
<keyword id="KW-0436">Ligase</keyword>
<keyword id="KW-0460">Magnesium</keyword>
<keyword id="KW-0479">Metal-binding</keyword>
<keyword id="KW-0547">Nucleotide-binding</keyword>
<keyword id="KW-1185">Reference proteome</keyword>
<name>ACSA_SHEPA</name>
<accession>A8H5P1</accession>
<reference key="1">
    <citation type="submission" date="2007-10" db="EMBL/GenBank/DDBJ databases">
        <title>Complete sequence of Shewanella pealeana ATCC 700345.</title>
        <authorList>
            <consortium name="US DOE Joint Genome Institute"/>
            <person name="Copeland A."/>
            <person name="Lucas S."/>
            <person name="Lapidus A."/>
            <person name="Barry K."/>
            <person name="Glavina del Rio T."/>
            <person name="Dalin E."/>
            <person name="Tice H."/>
            <person name="Pitluck S."/>
            <person name="Chertkov O."/>
            <person name="Brettin T."/>
            <person name="Bruce D."/>
            <person name="Detter J.C."/>
            <person name="Han C."/>
            <person name="Schmutz J."/>
            <person name="Larimer F."/>
            <person name="Land M."/>
            <person name="Hauser L."/>
            <person name="Kyrpides N."/>
            <person name="Kim E."/>
            <person name="Zhao J.-S.Z."/>
            <person name="Manno D."/>
            <person name="Hawari J."/>
            <person name="Richardson P."/>
        </authorList>
    </citation>
    <scope>NUCLEOTIDE SEQUENCE [LARGE SCALE GENOMIC DNA]</scope>
    <source>
        <strain>ATCC 700345 / ANG-SQ1</strain>
    </source>
</reference>
<protein>
    <recommendedName>
        <fullName evidence="1">Acetyl-coenzyme A synthetase</fullName>
        <shortName evidence="1">AcCoA synthetase</shortName>
        <shortName evidence="1">Acs</shortName>
        <ecNumber evidence="1">6.2.1.1</ecNumber>
    </recommendedName>
    <alternativeName>
        <fullName evidence="1">Acetate--CoA ligase</fullName>
    </alternativeName>
    <alternativeName>
        <fullName evidence="1">Acyl-activating enzyme</fullName>
    </alternativeName>
</protein>
<sequence>MSTQSLYKVPSEIAANALVNDEQYKKMYQESIVNPEGFWREHGNRIDWIKPFTKVKKTSFDDHNLFIKWFYDGTLNASANCLDRHLENNADKLAIIWEGDDAKDQRTLTYGQLHAEVCKFANALRSQGVRRGDVVTVYMPMVPEAAVAMLACARIGAIHSVVFGGFSPDSIASRVIDGNSKVVITADEGVRAGRIIPLKANIDEALSHPDVNCVEKVIVMKRTGGDINWVEGRDIWWGSLMETASEHCIPEEMGAEDPLFLLYTSGSTGNPKGVLHTTGGYMVYAAMTHEYVFDYKENEVYWCTADVGWITGHSYMVYGPLANGATVLIHEGVPNYPTPARLGEMVDRHKVNILYTAPTLIRALMAEGKEQFEGFDGSSLRIMGSVGEPINPEAWRWYNDVIGHEKCPIVDTWWQTETGGILISPLPGATDTKPGSATRPFFGVQPALVDNIGNIVEGANEGNLVILDSWPGQMRTVFGDHDRFVLTYFKTFRGMYFTGDGARRDEDGYYWITGRVDDVINVSGHRLGTAEVESALVAHELVAEAAVVGYPHDIKGQGIYAYVTLTKGSVETEELRQELRQWVRKEIGALATPDLIQWAGGLPKTRSGKIMRRFLRKIAANEVTNLGDSSTLADPAVIDTLIETRLNRSE</sequence>